<protein>
    <recommendedName>
        <fullName>RNA 3'-terminal phosphate cyclase</fullName>
        <shortName>RNA cyclase</shortName>
        <shortName>RNA-3'-phosphate cyclase</shortName>
        <ecNumber>6.5.1.4</ecNumber>
    </recommendedName>
</protein>
<organism>
    <name type="scientific">Thermococcus kodakarensis (strain ATCC BAA-918 / JCM 12380 / KOD1)</name>
    <name type="common">Pyrococcus kodakaraensis (strain KOD1)</name>
    <dbReference type="NCBI Taxonomy" id="69014"/>
    <lineage>
        <taxon>Archaea</taxon>
        <taxon>Methanobacteriati</taxon>
        <taxon>Methanobacteriota</taxon>
        <taxon>Thermococci</taxon>
        <taxon>Thermococcales</taxon>
        <taxon>Thermococcaceae</taxon>
        <taxon>Thermococcus</taxon>
    </lineage>
</organism>
<gene>
    <name type="primary">rtcA</name>
    <name type="ordered locus">TK1615</name>
</gene>
<evidence type="ECO:0000250" key="1"/>
<evidence type="ECO:0000305" key="2"/>
<name>RTCA_THEKO</name>
<sequence length="343" mass="37149">MEWVEIDGSYGEGGGQILRTSVALSVITGKPVRIYNIRANRPNPGLRPQHLHGILALKELSNAKIKGASVGSTELEFIPGKAEPKHVRVPIKTAGSITLVLQALLPAMAFIGGSFEITGGTDVPWSPPVDYLKHVTLYALEKMGIKVELEIKRRGHYPRGGGLVVGRIEPWEEKKPLKALKWERIEWFAGISHATNLPAHVAERQAKAARERLSEVYSAPVEIETEVSRSLGPGSGIVVWAETDKLRLGGDALGKRGKPAEVVGREAADELIEALKTGMAADRFLGDQLIPFLAFAGGEVGVSEITNHLVTNVWVVEKFFGNVFEVEGEVGKPGTLRVVKSVL</sequence>
<feature type="chain" id="PRO_0000156434" description="RNA 3'-terminal phosphate cyclase">
    <location>
        <begin position="1"/>
        <end position="343"/>
    </location>
</feature>
<feature type="active site" description="Tele-AMP-histidine intermediate" evidence="1">
    <location>
        <position position="308"/>
    </location>
</feature>
<feature type="binding site" evidence="1">
    <location>
        <position position="102"/>
    </location>
    <ligand>
        <name>ATP</name>
        <dbReference type="ChEBI" id="CHEBI:30616"/>
    </ligand>
</feature>
<feature type="binding site" evidence="1">
    <location>
        <begin position="284"/>
        <end position="288"/>
    </location>
    <ligand>
        <name>ATP</name>
        <dbReference type="ChEBI" id="CHEBI:30616"/>
    </ligand>
</feature>
<reference key="1">
    <citation type="journal article" date="2005" name="Genome Res.">
        <title>Complete genome sequence of the hyperthermophilic archaeon Thermococcus kodakaraensis KOD1 and comparison with Pyrococcus genomes.</title>
        <authorList>
            <person name="Fukui T."/>
            <person name="Atomi H."/>
            <person name="Kanai T."/>
            <person name="Matsumi R."/>
            <person name="Fujiwara S."/>
            <person name="Imanaka T."/>
        </authorList>
    </citation>
    <scope>NUCLEOTIDE SEQUENCE [LARGE SCALE GENOMIC DNA]</scope>
    <source>
        <strain>ATCC BAA-918 / JCM 12380 / KOD1</strain>
    </source>
</reference>
<accession>Q5JIQ0</accession>
<keyword id="KW-0067">ATP-binding</keyword>
<keyword id="KW-0963">Cytoplasm</keyword>
<keyword id="KW-0436">Ligase</keyword>
<keyword id="KW-0547">Nucleotide-binding</keyword>
<keyword id="KW-1185">Reference proteome</keyword>
<comment type="function">
    <text evidence="1">Catalyzes the conversion of 3'-phosphate to a 2',3'-cyclic phosphodiester at the end of RNA. The mechanism of action of the enzyme occurs in 3 steps: (A) adenylation of the enzyme by ATP; (B) transfer of adenylate to an RNA-N3'P to produce RNA-N3'PP5'A; (C) and attack of the adjacent 2'-hydroxyl on the 3'-phosphorus in the diester linkage to produce the cyclic end product. The biological role of this enzyme is unknown but it is likely to function in some aspects of cellular RNA processing (By similarity).</text>
</comment>
<comment type="catalytic activity">
    <reaction>
        <text>a 3'-end 3'-phospho-ribonucleotide-RNA + ATP = a 3'-end 2',3'-cyclophospho-ribonucleotide-RNA + AMP + diphosphate</text>
        <dbReference type="Rhea" id="RHEA:23976"/>
        <dbReference type="Rhea" id="RHEA-COMP:10463"/>
        <dbReference type="Rhea" id="RHEA-COMP:10464"/>
        <dbReference type="ChEBI" id="CHEBI:30616"/>
        <dbReference type="ChEBI" id="CHEBI:33019"/>
        <dbReference type="ChEBI" id="CHEBI:83062"/>
        <dbReference type="ChEBI" id="CHEBI:83064"/>
        <dbReference type="ChEBI" id="CHEBI:456215"/>
        <dbReference type="EC" id="6.5.1.4"/>
    </reaction>
</comment>
<comment type="subcellular location">
    <subcellularLocation>
        <location evidence="2">Cytoplasm</location>
    </subcellularLocation>
</comment>
<comment type="similarity">
    <text evidence="2">Belongs to the RNA 3'-terminal cyclase family. Type 1 subfamily.</text>
</comment>
<proteinExistence type="inferred from homology"/>
<dbReference type="EC" id="6.5.1.4"/>
<dbReference type="EMBL" id="AP006878">
    <property type="protein sequence ID" value="BAD85804.1"/>
    <property type="molecule type" value="Genomic_DNA"/>
</dbReference>
<dbReference type="RefSeq" id="WP_011250566.1">
    <property type="nucleotide sequence ID" value="NC_006624.1"/>
</dbReference>
<dbReference type="SMR" id="Q5JIQ0"/>
<dbReference type="FunCoup" id="Q5JIQ0">
    <property type="interactions" value="145"/>
</dbReference>
<dbReference type="STRING" id="69014.TK1615"/>
<dbReference type="EnsemblBacteria" id="BAD85804">
    <property type="protein sequence ID" value="BAD85804"/>
    <property type="gene ID" value="TK1615"/>
</dbReference>
<dbReference type="GeneID" id="78448143"/>
<dbReference type="KEGG" id="tko:TK1615"/>
<dbReference type="PATRIC" id="fig|69014.16.peg.1574"/>
<dbReference type="eggNOG" id="arCOG04125">
    <property type="taxonomic scope" value="Archaea"/>
</dbReference>
<dbReference type="HOGENOM" id="CLU_027882_0_0_2"/>
<dbReference type="InParanoid" id="Q5JIQ0"/>
<dbReference type="OrthoDB" id="7994at2157"/>
<dbReference type="PhylomeDB" id="Q5JIQ0"/>
<dbReference type="Proteomes" id="UP000000536">
    <property type="component" value="Chromosome"/>
</dbReference>
<dbReference type="GO" id="GO:0005737">
    <property type="term" value="C:cytoplasm"/>
    <property type="evidence" value="ECO:0007669"/>
    <property type="project" value="UniProtKB-SubCell"/>
</dbReference>
<dbReference type="GO" id="GO:0005524">
    <property type="term" value="F:ATP binding"/>
    <property type="evidence" value="ECO:0007669"/>
    <property type="project" value="UniProtKB-KW"/>
</dbReference>
<dbReference type="GO" id="GO:0003963">
    <property type="term" value="F:RNA-3'-phosphate cyclase activity"/>
    <property type="evidence" value="ECO:0000318"/>
    <property type="project" value="GO_Central"/>
</dbReference>
<dbReference type="GO" id="GO:0006396">
    <property type="term" value="P:RNA processing"/>
    <property type="evidence" value="ECO:0007669"/>
    <property type="project" value="InterPro"/>
</dbReference>
<dbReference type="CDD" id="cd00874">
    <property type="entry name" value="RNA_Cyclase_Class_II"/>
    <property type="match status" value="1"/>
</dbReference>
<dbReference type="FunFam" id="3.30.360.20:FF:000002">
    <property type="entry name" value="RNA terminal phosphate cyclase-like 1"/>
    <property type="match status" value="1"/>
</dbReference>
<dbReference type="Gene3D" id="3.65.10.20">
    <property type="entry name" value="RNA 3'-terminal phosphate cyclase domain"/>
    <property type="match status" value="1"/>
</dbReference>
<dbReference type="Gene3D" id="3.30.360.20">
    <property type="entry name" value="RNA 3'-terminal phosphate cyclase, insert domain"/>
    <property type="match status" value="1"/>
</dbReference>
<dbReference type="HAMAP" id="MF_00200">
    <property type="entry name" value="RTC"/>
    <property type="match status" value="1"/>
</dbReference>
<dbReference type="InterPro" id="IPR013791">
    <property type="entry name" value="RNA3'-term_phos_cycl_insert"/>
</dbReference>
<dbReference type="InterPro" id="IPR023797">
    <property type="entry name" value="RNA3'_phos_cyclase_dom"/>
</dbReference>
<dbReference type="InterPro" id="IPR037136">
    <property type="entry name" value="RNA3'_phos_cyclase_dom_sf"/>
</dbReference>
<dbReference type="InterPro" id="IPR000228">
    <property type="entry name" value="RNA3'_term_phos_cyc"/>
</dbReference>
<dbReference type="InterPro" id="IPR017770">
    <property type="entry name" value="RNA3'_term_phos_cyc_type_1"/>
</dbReference>
<dbReference type="InterPro" id="IPR020719">
    <property type="entry name" value="RNA3'_term_phos_cycl-like_CS"/>
</dbReference>
<dbReference type="InterPro" id="IPR013792">
    <property type="entry name" value="RNA3'P_cycl/enolpyr_Trfase_a/b"/>
</dbReference>
<dbReference type="InterPro" id="IPR036553">
    <property type="entry name" value="RPTC_insert"/>
</dbReference>
<dbReference type="NCBIfam" id="TIGR03399">
    <property type="entry name" value="RNA_3prim_cycl"/>
    <property type="match status" value="1"/>
</dbReference>
<dbReference type="PANTHER" id="PTHR11096">
    <property type="entry name" value="RNA 3' TERMINAL PHOSPHATE CYCLASE"/>
    <property type="match status" value="1"/>
</dbReference>
<dbReference type="PANTHER" id="PTHR11096:SF0">
    <property type="entry name" value="RNA 3'-TERMINAL PHOSPHATE CYCLASE"/>
    <property type="match status" value="1"/>
</dbReference>
<dbReference type="Pfam" id="PF01137">
    <property type="entry name" value="RTC"/>
    <property type="match status" value="1"/>
</dbReference>
<dbReference type="Pfam" id="PF05189">
    <property type="entry name" value="RTC_insert"/>
    <property type="match status" value="1"/>
</dbReference>
<dbReference type="PIRSF" id="PIRSF005378">
    <property type="entry name" value="RNA3'_term_phos_cycl_euk"/>
    <property type="match status" value="1"/>
</dbReference>
<dbReference type="SUPFAM" id="SSF55205">
    <property type="entry name" value="EPT/RTPC-like"/>
    <property type="match status" value="1"/>
</dbReference>
<dbReference type="SUPFAM" id="SSF52913">
    <property type="entry name" value="RNA 3'-terminal phosphate cyclase, RPTC, insert domain"/>
    <property type="match status" value="1"/>
</dbReference>
<dbReference type="PROSITE" id="PS01287">
    <property type="entry name" value="RTC"/>
    <property type="match status" value="1"/>
</dbReference>